<protein>
    <recommendedName>
        <fullName>Early E3 18.5 kDa glycoprotein</fullName>
    </recommendedName>
    <alternativeName>
        <fullName>E3-19K</fullName>
    </alternativeName>
    <alternativeName>
        <fullName>E3gp 19 kDa</fullName>
        <shortName>E19</shortName>
    </alternativeName>
    <alternativeName>
        <fullName>GP19K</fullName>
    </alternativeName>
</protein>
<reference key="1">
    <citation type="journal article" date="1992" name="Virology">
        <title>The nucleotide sequence of adenovirus type 11 early 3 region: comparison of genome type Ad11p and Ad11a.</title>
        <authorList>
            <person name="Mei Y.-F."/>
            <person name="Wadell G."/>
        </authorList>
    </citation>
    <scope>NUCLEOTIDE SEQUENCE [GENOMIC DNA]</scope>
</reference>
<reference key="2">
    <citation type="journal article" date="2003" name="J. Gen. Virol.">
        <title>Comparative analysis of the genome organization of human adenovirus 11, a member of the human adenovirus species B, and the commonly used human adenovirus 5 vector, a member of species C.</title>
        <authorList>
            <person name="Mei Y.-F."/>
            <person name="Skog J."/>
            <person name="Lindman K."/>
            <person name="Wadell G."/>
        </authorList>
    </citation>
    <scope>NUCLEOTIDE SEQUENCE [GENOMIC DNA]</scope>
</reference>
<feature type="signal peptide" evidence="2">
    <location>
        <begin position="1"/>
        <end position="19"/>
    </location>
</feature>
<feature type="chain" id="PRO_0000036487" description="Early E3 18.5 kDa glycoprotein">
    <location>
        <begin position="20"/>
        <end position="166"/>
    </location>
</feature>
<feature type="topological domain" description="Lumenal" evidence="2">
    <location>
        <begin position="20"/>
        <end position="131"/>
    </location>
</feature>
<feature type="transmembrane region" description="Helical" evidence="2">
    <location>
        <begin position="132"/>
        <end position="152"/>
    </location>
</feature>
<feature type="topological domain" description="Cytoplasmic" evidence="2">
    <location>
        <begin position="153"/>
        <end position="166"/>
    </location>
</feature>
<feature type="short sequence motif" description="Di-lysine motif" evidence="1">
    <location>
        <begin position="162"/>
        <end position="166"/>
    </location>
</feature>
<feature type="glycosylation site" description="N-linked (GlcNAc...) asparagine; by host" evidence="2">
    <location>
        <position position="31"/>
    </location>
</feature>
<feature type="glycosylation site" description="N-linked (GlcNAc...) asparagine; by host" evidence="2">
    <location>
        <position position="63"/>
    </location>
</feature>
<feature type="glycosylation site" description="N-linked (GlcNAc...) asparagine; by host" evidence="2">
    <location>
        <position position="67"/>
    </location>
</feature>
<feature type="glycosylation site" description="N-linked (GlcNAc...) asparagine; by host" evidence="2">
    <location>
        <position position="97"/>
    </location>
</feature>
<feature type="disulfide bond" evidence="1">
    <location>
        <begin position="32"/>
        <end position="50"/>
    </location>
</feature>
<feature type="disulfide bond" evidence="1">
    <location>
        <begin position="44"/>
        <end position="106"/>
    </location>
</feature>
<name>E3GL_ADE1P</name>
<proteinExistence type="evidence at transcript level"/>
<evidence type="ECO:0000250" key="1"/>
<evidence type="ECO:0000255" key="2"/>
<evidence type="ECO:0000305" key="3"/>
<dbReference type="EMBL" id="AF532578">
    <property type="protein sequence ID" value="AAP49188.1"/>
    <property type="molecule type" value="Genomic_DNA"/>
</dbReference>
<dbReference type="PIR" id="A44057">
    <property type="entry name" value="A44057"/>
</dbReference>
<dbReference type="SMR" id="P68980"/>
<dbReference type="Proteomes" id="UP000128793">
    <property type="component" value="Segment"/>
</dbReference>
<dbReference type="GO" id="GO:0044167">
    <property type="term" value="C:host cell endoplasmic reticulum membrane"/>
    <property type="evidence" value="ECO:0007669"/>
    <property type="project" value="UniProtKB-SubCell"/>
</dbReference>
<dbReference type="GO" id="GO:0016020">
    <property type="term" value="C:membrane"/>
    <property type="evidence" value="ECO:0007669"/>
    <property type="project" value="UniProtKB-KW"/>
</dbReference>
<dbReference type="GO" id="GO:0005537">
    <property type="term" value="F:D-mannose binding"/>
    <property type="evidence" value="ECO:0007669"/>
    <property type="project" value="UniProtKB-KW"/>
</dbReference>
<dbReference type="GO" id="GO:0046776">
    <property type="term" value="P:symbiont-mediated suppression of host antigen processing and presentation of peptide antigen via MHC class I"/>
    <property type="evidence" value="ECO:0007669"/>
    <property type="project" value="UniProtKB-KW"/>
</dbReference>
<dbReference type="Gene3D" id="2.60.40.3530">
    <property type="match status" value="1"/>
</dbReference>
<dbReference type="InterPro" id="IPR006965">
    <property type="entry name" value="Adenovirus_Gp19K"/>
</dbReference>
<dbReference type="InterPro" id="IPR038710">
    <property type="entry name" value="Adenovirus_Gp19K_sf"/>
</dbReference>
<dbReference type="Pfam" id="PF04881">
    <property type="entry name" value="Adeno_GP19K"/>
    <property type="match status" value="1"/>
</dbReference>
<organism>
    <name type="scientific">Human adenovirus B serotype 11 (strain Slobiski)</name>
    <name type="common">HAdV-11</name>
    <name type="synonym">Human adenovirus 11P (strain Slobiski)</name>
    <dbReference type="NCBI Taxonomy" id="343462"/>
    <lineage>
        <taxon>Viruses</taxon>
        <taxon>Varidnaviria</taxon>
        <taxon>Bamfordvirae</taxon>
        <taxon>Preplasmiviricota</taxon>
        <taxon>Tectiliviricetes</taxon>
        <taxon>Rowavirales</taxon>
        <taxon>Adenoviridae</taxon>
        <taxon>Mastadenovirus</taxon>
        <taxon>Human mastadenovirus B</taxon>
    </lineage>
</organism>
<organismHost>
    <name type="scientific">Homo sapiens</name>
    <name type="common">Human</name>
    <dbReference type="NCBI Taxonomy" id="9606"/>
</organismHost>
<keyword id="KW-1015">Disulfide bond</keyword>
<keyword id="KW-0244">Early protein</keyword>
<keyword id="KW-0325">Glycoprotein</keyword>
<keyword id="KW-1038">Host endoplasmic reticulum</keyword>
<keyword id="KW-1043">Host membrane</keyword>
<keyword id="KW-0945">Host-virus interaction</keyword>
<keyword id="KW-1080">Inhibition of host adaptive immune response by virus</keyword>
<keyword id="KW-1108">Inhibition of host tapasin by virus</keyword>
<keyword id="KW-0430">Lectin</keyword>
<keyword id="KW-0465">Mannose-binding</keyword>
<keyword id="KW-0472">Membrane</keyword>
<keyword id="KW-0732">Signal</keyword>
<keyword id="KW-0812">Transmembrane</keyword>
<keyword id="KW-1133">Transmembrane helix</keyword>
<keyword id="KW-0899">Viral immunoevasion</keyword>
<accession>P68980</accession>
<accession>P15140</accession>
<accession>P35772</accession>
<sequence length="166" mass="18576">MGPILVLLVLLSLLEPGSANYDPCLDFDPENCTLTFAPDTSRICGVLIKCGWECRSVEITHNNKTWNNTLSTTWEPGVPEWYTVSVRGPDGSIRISNNTFIFSEMCDLAMFMSKQYSLWPPSKDNIVTFSIAYCLCACLLTALLCVCIHLLVTTRIKNANNKEKMP</sequence>
<comment type="function">
    <text evidence="1">Binds and retains class I heavy chains in the endoplasmic reticulum during the early period of virus infection, thereby impairing their transport to the cell surface. Also delays the expression of class I alleles that it cannot affect by direct retention. Binds transporters associated with antigen processing (TAP) and acts as a tapasin inhibitor, preventing class I/TAP association. In consequence, infected cells are masked for immune recognition by cytotoxic T-lymphocytes (By similarity).</text>
</comment>
<comment type="subcellular location">
    <subcellularLocation>
        <location>Host endoplasmic reticulum membrane</location>
        <topology>Single-pass type I membrane protein</topology>
    </subcellularLocation>
</comment>
<comment type="developmental stage">
    <text>Expressed at early period of virus infection.</text>
</comment>
<comment type="domain">
    <text>The lumenal domain binds directly to the peptide-binding domain of class I molecules.</text>
</comment>
<comment type="domain">
    <text evidence="1">The di-lysine motif confers endoplasmic reticulum localization for type I membrane proteins.</text>
</comment>
<comment type="PTM">
    <text evidence="1">Both disulfide bonds are absolutely critical for the interaction with MHC antigens.</text>
</comment>
<comment type="PTM">
    <text evidence="1">N-glycosylated; high-mannose.</text>
</comment>
<comment type="similarity">
    <text evidence="3">Belongs to the adenoviridae E19 family.</text>
</comment>